<reference key="1">
    <citation type="submission" date="2006-05" db="EMBL/GenBank/DDBJ databases">
        <authorList>
            <consortium name="Genoscope"/>
        </authorList>
    </citation>
    <scope>NUCLEOTIDE SEQUENCE [LARGE SCALE GENOMIC DNA]</scope>
    <source>
        <strain>WH7803</strain>
    </source>
</reference>
<accession>A5GNG2</accession>
<proteinExistence type="inferred from homology"/>
<feature type="chain" id="PRO_1000010231" description="Ribosomal RNA small subunit methyltransferase G">
    <location>
        <begin position="1"/>
        <end position="254"/>
    </location>
</feature>
<feature type="region of interest" description="Disordered" evidence="2">
    <location>
        <begin position="231"/>
        <end position="254"/>
    </location>
</feature>
<feature type="binding site" evidence="1">
    <location>
        <position position="84"/>
    </location>
    <ligand>
        <name>S-adenosyl-L-methionine</name>
        <dbReference type="ChEBI" id="CHEBI:59789"/>
    </ligand>
</feature>
<feature type="binding site" evidence="1">
    <location>
        <position position="89"/>
    </location>
    <ligand>
        <name>S-adenosyl-L-methionine</name>
        <dbReference type="ChEBI" id="CHEBI:59789"/>
    </ligand>
</feature>
<feature type="binding site" evidence="1">
    <location>
        <begin position="136"/>
        <end position="137"/>
    </location>
    <ligand>
        <name>S-adenosyl-L-methionine</name>
        <dbReference type="ChEBI" id="CHEBI:59789"/>
    </ligand>
</feature>
<feature type="binding site" evidence="1">
    <location>
        <position position="155"/>
    </location>
    <ligand>
        <name>S-adenosyl-L-methionine</name>
        <dbReference type="ChEBI" id="CHEBI:59789"/>
    </ligand>
</feature>
<evidence type="ECO:0000255" key="1">
    <source>
        <dbReference type="HAMAP-Rule" id="MF_00074"/>
    </source>
</evidence>
<evidence type="ECO:0000256" key="2">
    <source>
        <dbReference type="SAM" id="MobiDB-lite"/>
    </source>
</evidence>
<name>RSMG_SYNPW</name>
<dbReference type="EC" id="2.1.1.-" evidence="1"/>
<dbReference type="EMBL" id="CT971583">
    <property type="protein sequence ID" value="CAK24477.1"/>
    <property type="molecule type" value="Genomic_DNA"/>
</dbReference>
<dbReference type="SMR" id="A5GNG2"/>
<dbReference type="STRING" id="32051.SynWH7803_2051"/>
<dbReference type="KEGG" id="syx:SynWH7803_2051"/>
<dbReference type="eggNOG" id="COG0357">
    <property type="taxonomic scope" value="Bacteria"/>
</dbReference>
<dbReference type="HOGENOM" id="CLU_065341_0_2_3"/>
<dbReference type="OrthoDB" id="9808773at2"/>
<dbReference type="Proteomes" id="UP000001566">
    <property type="component" value="Chromosome"/>
</dbReference>
<dbReference type="GO" id="GO:0005829">
    <property type="term" value="C:cytosol"/>
    <property type="evidence" value="ECO:0007669"/>
    <property type="project" value="TreeGrafter"/>
</dbReference>
<dbReference type="GO" id="GO:0070043">
    <property type="term" value="F:rRNA (guanine-N7-)-methyltransferase activity"/>
    <property type="evidence" value="ECO:0007669"/>
    <property type="project" value="UniProtKB-UniRule"/>
</dbReference>
<dbReference type="CDD" id="cd02440">
    <property type="entry name" value="AdoMet_MTases"/>
    <property type="match status" value="1"/>
</dbReference>
<dbReference type="Gene3D" id="3.40.50.150">
    <property type="entry name" value="Vaccinia Virus protein VP39"/>
    <property type="match status" value="1"/>
</dbReference>
<dbReference type="HAMAP" id="MF_00074">
    <property type="entry name" value="16SrRNA_methyltr_G"/>
    <property type="match status" value="1"/>
</dbReference>
<dbReference type="InterPro" id="IPR003682">
    <property type="entry name" value="rRNA_ssu_MeTfrase_G"/>
</dbReference>
<dbReference type="InterPro" id="IPR029063">
    <property type="entry name" value="SAM-dependent_MTases_sf"/>
</dbReference>
<dbReference type="NCBIfam" id="TIGR00138">
    <property type="entry name" value="rsmG_gidB"/>
    <property type="match status" value="1"/>
</dbReference>
<dbReference type="PANTHER" id="PTHR31760">
    <property type="entry name" value="S-ADENOSYL-L-METHIONINE-DEPENDENT METHYLTRANSFERASES SUPERFAMILY PROTEIN"/>
    <property type="match status" value="1"/>
</dbReference>
<dbReference type="PANTHER" id="PTHR31760:SF0">
    <property type="entry name" value="S-ADENOSYL-L-METHIONINE-DEPENDENT METHYLTRANSFERASES SUPERFAMILY PROTEIN"/>
    <property type="match status" value="1"/>
</dbReference>
<dbReference type="Pfam" id="PF02527">
    <property type="entry name" value="GidB"/>
    <property type="match status" value="1"/>
</dbReference>
<dbReference type="SUPFAM" id="SSF53335">
    <property type="entry name" value="S-adenosyl-L-methionine-dependent methyltransferases"/>
    <property type="match status" value="1"/>
</dbReference>
<sequence length="254" mass="27881">MPESTPFAAPGPELWSRLGWTPDAGQREQLITLQELLRDWNTRVNLTRLVEGEDFWVTQVLDSLWPLKPELDTADTPRRCIDVGTGGGFPGLAVAIALPGAELTLVDSVSRKTAAVAAMARSLGMADRVSVRTERVERTGQDPRCRGQFDLALARAVASAPVVAEYLVPLLHTNGQALLYRGRWQQEDQRDLDPALALLKAKTVAIERCELPSARGPRTVIRVMPEQPTPHLYPRAVGIPSKQPLGIQADDNRS</sequence>
<protein>
    <recommendedName>
        <fullName evidence="1">Ribosomal RNA small subunit methyltransferase G</fullName>
        <ecNumber evidence="1">2.1.1.-</ecNumber>
    </recommendedName>
    <alternativeName>
        <fullName evidence="1">16S rRNA 7-methylguanosine methyltransferase</fullName>
        <shortName evidence="1">16S rRNA m7G methyltransferase</shortName>
    </alternativeName>
</protein>
<comment type="function">
    <text evidence="1">Specifically methylates the N7 position of a guanine in 16S rRNA.</text>
</comment>
<comment type="subcellular location">
    <subcellularLocation>
        <location evidence="1">Cytoplasm</location>
    </subcellularLocation>
</comment>
<comment type="similarity">
    <text evidence="1">Belongs to the methyltransferase superfamily. RNA methyltransferase RsmG family.</text>
</comment>
<organism>
    <name type="scientific">Synechococcus sp. (strain WH7803)</name>
    <dbReference type="NCBI Taxonomy" id="32051"/>
    <lineage>
        <taxon>Bacteria</taxon>
        <taxon>Bacillati</taxon>
        <taxon>Cyanobacteriota</taxon>
        <taxon>Cyanophyceae</taxon>
        <taxon>Synechococcales</taxon>
        <taxon>Synechococcaceae</taxon>
        <taxon>Synechococcus</taxon>
    </lineage>
</organism>
<keyword id="KW-0963">Cytoplasm</keyword>
<keyword id="KW-0489">Methyltransferase</keyword>
<keyword id="KW-1185">Reference proteome</keyword>
<keyword id="KW-0698">rRNA processing</keyword>
<keyword id="KW-0949">S-adenosyl-L-methionine</keyword>
<keyword id="KW-0808">Transferase</keyword>
<gene>
    <name evidence="1" type="primary">rsmG</name>
    <name type="ordered locus">SynWH7803_2051</name>
</gene>